<comment type="function">
    <text evidence="2">Component of the ubiquinol-cytochrome c reductase complex (complex III or cytochrome b-c1 complex) that is part of the mitochondrial respiratory chain. The b-c1 complex mediates electron transfer from ubiquinol to cytochrome c. Contributes to the generation of a proton gradient across the mitochondrial membrane that is then used for ATP synthesis.</text>
</comment>
<comment type="cofactor">
    <cofactor evidence="2">
        <name>heme b</name>
        <dbReference type="ChEBI" id="CHEBI:60344"/>
    </cofactor>
    <text evidence="2">Binds 2 heme b groups non-covalently.</text>
</comment>
<comment type="subunit">
    <text evidence="2">The cytochrome bc1 complex contains 3 respiratory subunits (MT-CYB, CYC1 and UQCRFS1), 2 core proteins (UQCRC1 and UQCRC2) and probably 6 low-molecular weight proteins.</text>
</comment>
<comment type="subcellular location">
    <subcellularLocation>
        <location evidence="2">Mitochondrion inner membrane</location>
        <topology evidence="2">Multi-pass membrane protein</topology>
    </subcellularLocation>
</comment>
<comment type="miscellaneous">
    <text evidence="1">Heme 1 (or BL or b562) is low-potential and absorbs at about 562 nm, and heme 2 (or BH or b566) is high-potential and absorbs at about 566 nm.</text>
</comment>
<comment type="similarity">
    <text evidence="3 4">Belongs to the cytochrome b family.</text>
</comment>
<comment type="caution">
    <text evidence="2">The full-length protein contains only eight transmembrane helices, not nine as predicted by bioinformatics tools.</text>
</comment>
<geneLocation type="mitochondrion"/>
<feature type="chain" id="PRO_0000061204" description="Cytochrome b">
    <location>
        <begin position="1"/>
        <end position="371"/>
    </location>
</feature>
<feature type="transmembrane region" description="Helical" evidence="2">
    <location>
        <begin position="25"/>
        <end position="45"/>
    </location>
</feature>
<feature type="transmembrane region" description="Helical" evidence="2">
    <location>
        <begin position="69"/>
        <end position="90"/>
    </location>
</feature>
<feature type="transmembrane region" description="Helical" evidence="2">
    <location>
        <begin position="105"/>
        <end position="125"/>
    </location>
</feature>
<feature type="transmembrane region" description="Helical" evidence="2">
    <location>
        <begin position="170"/>
        <end position="190"/>
    </location>
</feature>
<feature type="transmembrane region" description="Helical" evidence="2">
    <location>
        <begin position="218"/>
        <end position="238"/>
    </location>
</feature>
<feature type="transmembrane region" description="Helical" evidence="2">
    <location>
        <begin position="280"/>
        <end position="300"/>
    </location>
</feature>
<feature type="transmembrane region" description="Helical" evidence="2">
    <location>
        <begin position="312"/>
        <end position="332"/>
    </location>
</feature>
<feature type="transmembrane region" description="Helical" evidence="2">
    <location>
        <begin position="339"/>
        <end position="358"/>
    </location>
</feature>
<feature type="binding site" description="axial binding residue" evidence="2">
    <location>
        <position position="75"/>
    </location>
    <ligand>
        <name>heme b</name>
        <dbReference type="ChEBI" id="CHEBI:60344"/>
        <label>b562</label>
    </ligand>
    <ligandPart>
        <name>Fe</name>
        <dbReference type="ChEBI" id="CHEBI:18248"/>
    </ligandPart>
</feature>
<feature type="binding site" description="axial binding residue" evidence="2">
    <location>
        <position position="89"/>
    </location>
    <ligand>
        <name>heme b</name>
        <dbReference type="ChEBI" id="CHEBI:60344"/>
        <label>b566</label>
    </ligand>
    <ligandPart>
        <name>Fe</name>
        <dbReference type="ChEBI" id="CHEBI:18248"/>
    </ligandPart>
</feature>
<feature type="binding site" description="axial binding residue" evidence="2">
    <location>
        <position position="174"/>
    </location>
    <ligand>
        <name>heme b</name>
        <dbReference type="ChEBI" id="CHEBI:60344"/>
        <label>b562</label>
    </ligand>
    <ligandPart>
        <name>Fe</name>
        <dbReference type="ChEBI" id="CHEBI:18248"/>
    </ligandPart>
</feature>
<feature type="binding site" description="axial binding residue" evidence="2">
    <location>
        <position position="188"/>
    </location>
    <ligand>
        <name>heme b</name>
        <dbReference type="ChEBI" id="CHEBI:60344"/>
        <label>b566</label>
    </ligand>
    <ligandPart>
        <name>Fe</name>
        <dbReference type="ChEBI" id="CHEBI:18248"/>
    </ligandPart>
</feature>
<feature type="binding site" evidence="2">
    <location>
        <position position="193"/>
    </location>
    <ligand>
        <name>a ubiquinone</name>
        <dbReference type="ChEBI" id="CHEBI:16389"/>
    </ligand>
</feature>
<proteinExistence type="inferred from homology"/>
<sequence>MPHHYILTLFGLLPVATNISTWWNFGSMLLTCLALQVLTGFFLAVHYTANINLAFSSIIHITRDVPYGWMMQNLHAIGASMFFICIYIHIARGLYYGSYLNKETWMSGITLLITLMATAFFGYVLPWGQMSFWAATVITNLLTAIPYLGTSLTTWLWGGFAINDPTLTRFFALHFILPFAIISLSSLHIILLHEEGSSNPLGTNPDIDKIPFHPYHSYKDLLLLTLMILFLFIIVSFFPDIFNDPDNFSKANPLVTPQHIKPEWYFLFAYGILRSIPNKLGGALALVMSIMILFTIPFMHTAHLRPMTFRPLSQLMFWTLVSTFITITWAATKPVEPPYIMISQMTATLYFTFFLSIPILGWMENKMMNIP</sequence>
<accession>O48102</accession>
<name>CYB_SIMAM</name>
<gene>
    <name type="primary">MT-CYB</name>
    <name type="synonym">COB</name>
    <name type="synonym">CYTB</name>
    <name type="synonym">MTCYB</name>
</gene>
<evidence type="ECO:0000250" key="1"/>
<evidence type="ECO:0000250" key="2">
    <source>
        <dbReference type="UniProtKB" id="P00157"/>
    </source>
</evidence>
<evidence type="ECO:0000255" key="3">
    <source>
        <dbReference type="PROSITE-ProRule" id="PRU00967"/>
    </source>
</evidence>
<evidence type="ECO:0000255" key="4">
    <source>
        <dbReference type="PROSITE-ProRule" id="PRU00968"/>
    </source>
</evidence>
<organism>
    <name type="scientific">Simalia amethistina</name>
    <name type="common">Amethystine python</name>
    <name type="synonym">Morelia amethistina</name>
    <dbReference type="NCBI Taxonomy" id="51895"/>
    <lineage>
        <taxon>Eukaryota</taxon>
        <taxon>Metazoa</taxon>
        <taxon>Chordata</taxon>
        <taxon>Craniata</taxon>
        <taxon>Vertebrata</taxon>
        <taxon>Euteleostomi</taxon>
        <taxon>Lepidosauria</taxon>
        <taxon>Squamata</taxon>
        <taxon>Bifurcata</taxon>
        <taxon>Unidentata</taxon>
        <taxon>Episquamata</taxon>
        <taxon>Toxicofera</taxon>
        <taxon>Serpentes</taxon>
        <taxon>Henophidia</taxon>
        <taxon>Pythonidae</taxon>
        <taxon>Simalia</taxon>
    </lineage>
</organism>
<keyword id="KW-0249">Electron transport</keyword>
<keyword id="KW-0349">Heme</keyword>
<keyword id="KW-0408">Iron</keyword>
<keyword id="KW-0472">Membrane</keyword>
<keyword id="KW-0479">Metal-binding</keyword>
<keyword id="KW-0496">Mitochondrion</keyword>
<keyword id="KW-0999">Mitochondrion inner membrane</keyword>
<keyword id="KW-0679">Respiratory chain</keyword>
<keyword id="KW-0812">Transmembrane</keyword>
<keyword id="KW-1133">Transmembrane helix</keyword>
<keyword id="KW-0813">Transport</keyword>
<keyword id="KW-0830">Ubiquinone</keyword>
<reference key="1">
    <citation type="thesis" date="1997" institute="Queen's University / Kingston" country="Canada">
        <title>Hic Sunt Serpentes -- molecular phylogenetics and the Boidae (Serpentes: Booidea).</title>
        <authorList>
            <person name="Campbell B.N."/>
        </authorList>
    </citation>
    <scope>NUCLEOTIDE SEQUENCE [GENOMIC DNA]</scope>
</reference>
<dbReference type="EMBL" id="U69847">
    <property type="protein sequence ID" value="AAC01880.1"/>
    <property type="molecule type" value="Genomic_DNA"/>
</dbReference>
<dbReference type="EMBL" id="U69848">
    <property type="protein sequence ID" value="AAC01881.1"/>
    <property type="molecule type" value="Genomic_DNA"/>
</dbReference>
<dbReference type="EMBL" id="U69849">
    <property type="protein sequence ID" value="AAC01882.1"/>
    <property type="molecule type" value="Genomic_DNA"/>
</dbReference>
<dbReference type="SMR" id="O48102"/>
<dbReference type="GO" id="GO:0005743">
    <property type="term" value="C:mitochondrial inner membrane"/>
    <property type="evidence" value="ECO:0007669"/>
    <property type="project" value="UniProtKB-SubCell"/>
</dbReference>
<dbReference type="GO" id="GO:0045275">
    <property type="term" value="C:respiratory chain complex III"/>
    <property type="evidence" value="ECO:0007669"/>
    <property type="project" value="InterPro"/>
</dbReference>
<dbReference type="GO" id="GO:0046872">
    <property type="term" value="F:metal ion binding"/>
    <property type="evidence" value="ECO:0007669"/>
    <property type="project" value="UniProtKB-KW"/>
</dbReference>
<dbReference type="GO" id="GO:0008121">
    <property type="term" value="F:ubiquinol-cytochrome-c reductase activity"/>
    <property type="evidence" value="ECO:0007669"/>
    <property type="project" value="InterPro"/>
</dbReference>
<dbReference type="GO" id="GO:0006122">
    <property type="term" value="P:mitochondrial electron transport, ubiquinol to cytochrome c"/>
    <property type="evidence" value="ECO:0007669"/>
    <property type="project" value="TreeGrafter"/>
</dbReference>
<dbReference type="CDD" id="cd00290">
    <property type="entry name" value="cytochrome_b_C"/>
    <property type="match status" value="1"/>
</dbReference>
<dbReference type="CDD" id="cd00284">
    <property type="entry name" value="Cytochrome_b_N"/>
    <property type="match status" value="1"/>
</dbReference>
<dbReference type="Gene3D" id="1.20.810.10">
    <property type="entry name" value="Cytochrome Bc1 Complex, Chain C"/>
    <property type="match status" value="1"/>
</dbReference>
<dbReference type="InterPro" id="IPR005798">
    <property type="entry name" value="Cyt_b/b6_C"/>
</dbReference>
<dbReference type="InterPro" id="IPR036150">
    <property type="entry name" value="Cyt_b/b6_C_sf"/>
</dbReference>
<dbReference type="InterPro" id="IPR005797">
    <property type="entry name" value="Cyt_b/b6_N"/>
</dbReference>
<dbReference type="InterPro" id="IPR027387">
    <property type="entry name" value="Cytb/b6-like_sf"/>
</dbReference>
<dbReference type="InterPro" id="IPR030689">
    <property type="entry name" value="Cytochrome_b"/>
</dbReference>
<dbReference type="InterPro" id="IPR048260">
    <property type="entry name" value="Cytochrome_b_C_euk/bac"/>
</dbReference>
<dbReference type="InterPro" id="IPR048259">
    <property type="entry name" value="Cytochrome_b_N_euk/bac"/>
</dbReference>
<dbReference type="InterPro" id="IPR016174">
    <property type="entry name" value="Di-haem_cyt_TM"/>
</dbReference>
<dbReference type="PANTHER" id="PTHR19271">
    <property type="entry name" value="CYTOCHROME B"/>
    <property type="match status" value="1"/>
</dbReference>
<dbReference type="PANTHER" id="PTHR19271:SF16">
    <property type="entry name" value="CYTOCHROME B"/>
    <property type="match status" value="1"/>
</dbReference>
<dbReference type="Pfam" id="PF00032">
    <property type="entry name" value="Cytochrom_B_C"/>
    <property type="match status" value="1"/>
</dbReference>
<dbReference type="Pfam" id="PF00033">
    <property type="entry name" value="Cytochrome_B"/>
    <property type="match status" value="1"/>
</dbReference>
<dbReference type="PIRSF" id="PIRSF038885">
    <property type="entry name" value="COB"/>
    <property type="match status" value="1"/>
</dbReference>
<dbReference type="SUPFAM" id="SSF81648">
    <property type="entry name" value="a domain/subunit of cytochrome bc1 complex (Ubiquinol-cytochrome c reductase)"/>
    <property type="match status" value="1"/>
</dbReference>
<dbReference type="SUPFAM" id="SSF81342">
    <property type="entry name" value="Transmembrane di-heme cytochromes"/>
    <property type="match status" value="1"/>
</dbReference>
<dbReference type="PROSITE" id="PS51003">
    <property type="entry name" value="CYTB_CTER"/>
    <property type="match status" value="1"/>
</dbReference>
<dbReference type="PROSITE" id="PS51002">
    <property type="entry name" value="CYTB_NTER"/>
    <property type="match status" value="1"/>
</dbReference>
<protein>
    <recommendedName>
        <fullName>Cytochrome b</fullName>
    </recommendedName>
    <alternativeName>
        <fullName>Complex III subunit 3</fullName>
    </alternativeName>
    <alternativeName>
        <fullName>Complex III subunit III</fullName>
    </alternativeName>
    <alternativeName>
        <fullName>Cytochrome b-c1 complex subunit 3</fullName>
    </alternativeName>
    <alternativeName>
        <fullName>Ubiquinol-cytochrome-c reductase complex cytochrome b subunit</fullName>
    </alternativeName>
</protein>